<accession>A0A077EYL8</accession>
<reference key="1">
    <citation type="journal article" date="2014" name="PLoS ONE">
        <title>Cloning and characterization of a norbelladine 4'-O-methyltransferase involved in the biosynthesis of the Alzheimer's drug galanthamine in Narcissus sp. aff. pseudonarcissus.</title>
        <authorList>
            <person name="Kilgore M.B."/>
            <person name="Augustin M.M."/>
            <person name="Starks C.M."/>
            <person name="O'Neil-Johnson M."/>
            <person name="May G.D."/>
            <person name="Crow J.A."/>
            <person name="Kutchan T.M."/>
        </authorList>
    </citation>
    <scope>NUCLEOTIDE SEQUENCE [MRNA]</scope>
    <source>
        <strain>cv. Carlton</strain>
        <tissue>Bulb</tissue>
    </source>
</reference>
<dbReference type="EC" id="2.1.1.336" evidence="1"/>
<dbReference type="EMBL" id="KJ584563">
    <property type="protein sequence ID" value="AIL54543.1"/>
    <property type="molecule type" value="mRNA"/>
</dbReference>
<dbReference type="GO" id="GO:0046872">
    <property type="term" value="F:metal ion binding"/>
    <property type="evidence" value="ECO:0007669"/>
    <property type="project" value="UniProtKB-KW"/>
</dbReference>
<dbReference type="GO" id="GO:0008171">
    <property type="term" value="F:O-methyltransferase activity"/>
    <property type="evidence" value="ECO:0007669"/>
    <property type="project" value="InterPro"/>
</dbReference>
<dbReference type="GO" id="GO:0008757">
    <property type="term" value="F:S-adenosylmethionine-dependent methyltransferase activity"/>
    <property type="evidence" value="ECO:0007669"/>
    <property type="project" value="TreeGrafter"/>
</dbReference>
<dbReference type="GO" id="GO:0009820">
    <property type="term" value="P:alkaloid metabolic process"/>
    <property type="evidence" value="ECO:0007669"/>
    <property type="project" value="UniProtKB-KW"/>
</dbReference>
<dbReference type="GO" id="GO:0032259">
    <property type="term" value="P:methylation"/>
    <property type="evidence" value="ECO:0007669"/>
    <property type="project" value="UniProtKB-KW"/>
</dbReference>
<dbReference type="Gene3D" id="3.40.50.150">
    <property type="entry name" value="Vaccinia Virus protein VP39"/>
    <property type="match status" value="1"/>
</dbReference>
<dbReference type="InterPro" id="IPR050362">
    <property type="entry name" value="Cation-dep_OMT"/>
</dbReference>
<dbReference type="InterPro" id="IPR029063">
    <property type="entry name" value="SAM-dependent_MTases_sf"/>
</dbReference>
<dbReference type="InterPro" id="IPR002935">
    <property type="entry name" value="SAM_O-MeTrfase"/>
</dbReference>
<dbReference type="PANTHER" id="PTHR10509">
    <property type="entry name" value="O-METHYLTRANSFERASE-RELATED"/>
    <property type="match status" value="1"/>
</dbReference>
<dbReference type="PANTHER" id="PTHR10509:SF34">
    <property type="entry name" value="TAPETUM-SPECIFIC METHYLTRANSFERASE 1"/>
    <property type="match status" value="1"/>
</dbReference>
<dbReference type="Pfam" id="PF01596">
    <property type="entry name" value="Methyltransf_3"/>
    <property type="match status" value="1"/>
</dbReference>
<dbReference type="SUPFAM" id="SSF53335">
    <property type="entry name" value="S-adenosyl-L-methionine-dependent methyltransferases"/>
    <property type="match status" value="1"/>
</dbReference>
<dbReference type="PROSITE" id="PS51682">
    <property type="entry name" value="SAM_OMT_I"/>
    <property type="match status" value="1"/>
</dbReference>
<comment type="function">
    <text evidence="1 2">4'-O-methyltransferase converting norbelladine to 4'-O-methylnorbelladine (By similarity). 4'-O-methylnorbelladine is a precursor to all Amaryllidaceae alkaloids such as galanthamine, lycorine and haemanthamine, and including haemanthamine- and crinamine-type alkaloids, promising anticancer agents (By similarity).</text>
</comment>
<comment type="catalytic activity">
    <reaction evidence="1">
        <text>norbelladine + S-adenosyl-L-methionine = 4'-O-methylnorbelladine + S-adenosyl-L-homocysteine + H(+)</text>
        <dbReference type="Rhea" id="RHEA:51268"/>
        <dbReference type="ChEBI" id="CHEBI:15378"/>
        <dbReference type="ChEBI" id="CHEBI:57856"/>
        <dbReference type="ChEBI" id="CHEBI:59789"/>
        <dbReference type="ChEBI" id="CHEBI:133993"/>
        <dbReference type="ChEBI" id="CHEBI:134001"/>
        <dbReference type="EC" id="2.1.1.336"/>
    </reaction>
</comment>
<comment type="cofactor">
    <cofactor evidence="1">
        <name>Mg(2+)</name>
        <dbReference type="ChEBI" id="CHEBI:18420"/>
    </cofactor>
</comment>
<comment type="pathway">
    <text evidence="1">Alkaloid biosynthesis.</text>
</comment>
<comment type="similarity">
    <text evidence="5">Belongs to the class I-like SAM-binding methyltransferase superfamily. Cation-dependent O-methyltransferase family.</text>
</comment>
<feature type="chain" id="PRO_0000450643" description="Norbelladine 4'-O-methyltransferase 3">
    <location>
        <begin position="1"/>
        <end position="239"/>
    </location>
</feature>
<feature type="binding site" evidence="3">
    <location>
        <position position="55"/>
    </location>
    <ligand>
        <name>S-adenosyl-L-methionine</name>
        <dbReference type="ChEBI" id="CHEBI:59789"/>
    </ligand>
</feature>
<feature type="binding site" evidence="3">
    <location>
        <position position="77"/>
    </location>
    <ligand>
        <name>S-adenosyl-L-methionine</name>
        <dbReference type="ChEBI" id="CHEBI:59789"/>
    </ligand>
</feature>
<feature type="binding site" evidence="3">
    <location>
        <begin position="79"/>
        <end position="80"/>
    </location>
    <ligand>
        <name>S-adenosyl-L-methionine</name>
        <dbReference type="ChEBI" id="CHEBI:59789"/>
    </ligand>
</feature>
<feature type="binding site" evidence="3">
    <location>
        <position position="85"/>
    </location>
    <ligand>
        <name>S-adenosyl-L-methionine</name>
        <dbReference type="ChEBI" id="CHEBI:59789"/>
    </ligand>
</feature>
<feature type="binding site" evidence="3">
    <location>
        <position position="103"/>
    </location>
    <ligand>
        <name>S-adenosyl-L-methionine</name>
        <dbReference type="ChEBI" id="CHEBI:59789"/>
    </ligand>
</feature>
<feature type="binding site" evidence="3">
    <location>
        <position position="132"/>
    </location>
    <ligand>
        <name>S-adenosyl-L-methionine</name>
        <dbReference type="ChEBI" id="CHEBI:59789"/>
    </ligand>
</feature>
<feature type="binding site" evidence="3">
    <location>
        <position position="155"/>
    </location>
    <ligand>
        <name>a divalent metal cation</name>
        <dbReference type="ChEBI" id="CHEBI:60240"/>
    </ligand>
</feature>
<feature type="binding site" evidence="3">
    <location>
        <position position="157"/>
    </location>
    <ligand>
        <name>S-adenosyl-L-methionine</name>
        <dbReference type="ChEBI" id="CHEBI:59789"/>
    </ligand>
</feature>
<feature type="binding site" evidence="3">
    <location>
        <position position="181"/>
    </location>
    <ligand>
        <name>a divalent metal cation</name>
        <dbReference type="ChEBI" id="CHEBI:60240"/>
    </ligand>
</feature>
<feature type="binding site" evidence="3">
    <location>
        <position position="182"/>
    </location>
    <ligand>
        <name>a divalent metal cation</name>
        <dbReference type="ChEBI" id="CHEBI:60240"/>
    </ligand>
</feature>
<gene>
    <name evidence="4" type="primary">N4OMT3</name>
</gene>
<protein>
    <recommendedName>
        <fullName evidence="4">Norbelladine 4'-O-methyltransferase 3</fullName>
        <shortName evidence="4">NpN4OMT3</shortName>
        <ecNumber evidence="1">2.1.1.336</ecNumber>
    </recommendedName>
</protein>
<evidence type="ECO:0000250" key="1">
    <source>
        <dbReference type="UniProtKB" id="A0A077EWA5"/>
    </source>
</evidence>
<evidence type="ECO:0000250" key="2">
    <source>
        <dbReference type="UniProtKB" id="A0A2H5AIZ6"/>
    </source>
</evidence>
<evidence type="ECO:0000255" key="3">
    <source>
        <dbReference type="PROSITE-ProRule" id="PRU01019"/>
    </source>
</evidence>
<evidence type="ECO:0000303" key="4">
    <source>
    </source>
</evidence>
<evidence type="ECO:0000305" key="5"/>
<sequence>MGASIDDYSLVHKNILHSEDLLKYILETSAYPREHEQLKGLREVTEKHEWSSALVPADEGLFLSMLLKLMNAKRTIEIGVYTGYSLLTTALALPEDGKITAIDVNKSFFEIGLPFIQKAGVEHKINFIESEALPVLDQMLQEMKEEDLYDYAFVDADKSNYANYHERLVKLVRIGGAILYDNTLWYGSVAYPEYPGLHPEEEVARLSFRNLNTFLAADPRVEISQVSIGDGVTIXRRLY</sequence>
<proteinExistence type="evidence at transcript level"/>
<name>NOMT3_NARAP</name>
<organism>
    <name type="scientific">Narcissus aff. pseudonarcissus MK-2014</name>
    <name type="common">Daffodil</name>
    <dbReference type="NCBI Taxonomy" id="1540222"/>
    <lineage>
        <taxon>Eukaryota</taxon>
        <taxon>Viridiplantae</taxon>
        <taxon>Streptophyta</taxon>
        <taxon>Embryophyta</taxon>
        <taxon>Tracheophyta</taxon>
        <taxon>Spermatophyta</taxon>
        <taxon>Magnoliopsida</taxon>
        <taxon>Liliopsida</taxon>
        <taxon>Asparagales</taxon>
        <taxon>Amaryllidaceae</taxon>
        <taxon>Amaryllidoideae</taxon>
        <taxon>Narcissus</taxon>
    </lineage>
</organism>
<keyword id="KW-0017">Alkaloid metabolism</keyword>
<keyword id="KW-0479">Metal-binding</keyword>
<keyword id="KW-0489">Methyltransferase</keyword>
<keyword id="KW-0949">S-adenosyl-L-methionine</keyword>
<keyword id="KW-0808">Transferase</keyword>